<sequence length="421" mass="45429">MSTTKPICLVPLHVVIVGAGIGGLSAAVALANRGHSVLILESTSELSHVGAGVALPPTTRKWYESEGVLQVDDTACVPLEGIEITKWDTGELVTRTAANPAGKQTAIHHGDMQLALLARARELTNVEIRLGARVVDVDLEATVALLADGQRVAGDLIIAADGVKSTLKAKVCPPEAVVPLPTGEAAYRFTLPRELLESDAELRELVQRPWGVRWDGPSCHVVAYPLRNHRLLNVVLIHPDNGDAKESWTSVTDKQNVLADYQGWNPTLLKLIALAPPEVPNFRMFLYSPAPVWVKGSTILLGDSCHAMLPYLGQGVAQAVEDATAIATVLSLIETRKQLPLALRAYESSRKERVDQIQAATYRAREQLHLRDGDAQAARDSQRKATSGTGQNSDVVKMQQSYWTWDAAGVAEKTLAALIIA</sequence>
<accession>A0A455LLW0</accession>
<dbReference type="EC" id="1.-.-.-" evidence="6"/>
<dbReference type="EMBL" id="MH183016">
    <property type="protein sequence ID" value="AYO60883.1"/>
    <property type="molecule type" value="mRNA"/>
</dbReference>
<dbReference type="SMR" id="A0A455LLW0"/>
<dbReference type="UniPathway" id="UPA00213"/>
<dbReference type="GO" id="GO:0016020">
    <property type="term" value="C:membrane"/>
    <property type="evidence" value="ECO:0007669"/>
    <property type="project" value="UniProtKB-SubCell"/>
</dbReference>
<dbReference type="GO" id="GO:0071949">
    <property type="term" value="F:FAD binding"/>
    <property type="evidence" value="ECO:0007669"/>
    <property type="project" value="InterPro"/>
</dbReference>
<dbReference type="GO" id="GO:0004497">
    <property type="term" value="F:monooxygenase activity"/>
    <property type="evidence" value="ECO:0007669"/>
    <property type="project" value="UniProtKB-KW"/>
</dbReference>
<dbReference type="GO" id="GO:0016114">
    <property type="term" value="P:terpenoid biosynthetic process"/>
    <property type="evidence" value="ECO:0007669"/>
    <property type="project" value="UniProtKB-UniPathway"/>
</dbReference>
<dbReference type="Gene3D" id="3.50.50.60">
    <property type="entry name" value="FAD/NAD(P)-binding domain"/>
    <property type="match status" value="1"/>
</dbReference>
<dbReference type="InterPro" id="IPR002938">
    <property type="entry name" value="FAD-bd"/>
</dbReference>
<dbReference type="InterPro" id="IPR050493">
    <property type="entry name" value="FAD-dep_Monooxygenase_BioMet"/>
</dbReference>
<dbReference type="InterPro" id="IPR036188">
    <property type="entry name" value="FAD/NAD-bd_sf"/>
</dbReference>
<dbReference type="PANTHER" id="PTHR13789:SF307">
    <property type="entry name" value="HYDROXYLASE, PUTATIVE (AFU_ORTHOLOGUE AFUA_2G04330)-RELATED"/>
    <property type="match status" value="1"/>
</dbReference>
<dbReference type="PANTHER" id="PTHR13789">
    <property type="entry name" value="MONOOXYGENASE"/>
    <property type="match status" value="1"/>
</dbReference>
<dbReference type="Pfam" id="PF01494">
    <property type="entry name" value="FAD_binding_3"/>
    <property type="match status" value="1"/>
</dbReference>
<dbReference type="PRINTS" id="PR00420">
    <property type="entry name" value="RNGMNOXGNASE"/>
</dbReference>
<dbReference type="SUPFAM" id="SSF54373">
    <property type="entry name" value="FAD-linked reductases, C-terminal domain"/>
    <property type="match status" value="1"/>
</dbReference>
<dbReference type="SUPFAM" id="SSF51905">
    <property type="entry name" value="FAD/NAD(P)-binding domain"/>
    <property type="match status" value="1"/>
</dbReference>
<gene>
    <name evidence="7" type="primary">atnJ</name>
</gene>
<proteinExistence type="evidence at protein level"/>
<keyword id="KW-0274">FAD</keyword>
<keyword id="KW-0285">Flavoprotein</keyword>
<keyword id="KW-0472">Membrane</keyword>
<keyword id="KW-0503">Monooxygenase</keyword>
<keyword id="KW-0560">Oxidoreductase</keyword>
<keyword id="KW-0812">Transmembrane</keyword>
<keyword id="KW-1133">Transmembrane helix</keyword>
<comment type="function">
    <text evidence="6 9">FAD-dependent monooxygenase; part of the gene cluster that mediates the biosynthesis of the meroterpenoids arthripenoids (PubMed:29797385). The pathway begins with the HR-PKS atnH that catalyzes two chain-extension steps to form a reduced triketide, which then primes the SAT domain in the NR-PKS atnG to initiate three more cycles of extension to give a linear hexaketide corresponding to the polyketide part of arthripenoids (PubMed:29797385). The FAD-dependent monooxygenase atnJ then performs an oxidative decarboxylation at C11 of the atnH/atnG product, via an electrophilic aromatic hydroxylation with concomitant ipso-decarboxylation (PubMed:29797385). The membrane-bound polyprenyl transferase atnF then introduces a farnesyl group before the FAD-dependent monooxygenase atnK functions as the first epoxidase on terminal C12'-C13' olefin, followed by a second epoxidation on C7'-C8' catalyzed by atnA (PubMed:29797385). The terpene cyclase/mutase atnI then initiates the sequential tricyclic ring formation through protonation of the terminal epoxide and catalyzes the regioselective and stereoselective 6/6/6-tricyclic ring formation (PubMed:29797385). The cytochrome P450 monooxygenase atnM is responsible for hydroxylating both C1' and C10' (Probable). The next steps may involve ketoreduction and acetyl transfer by the ketoreductase atnB and the acetyltransferase atnC, and lead to the production of arthripenoid B, the final biosynthetic product of the atn cluster (PubMed:29797385). The hydroquinone moiety in arthripenoid B is prone to undergo spontaneous oxidation to afford a benzoquinone compound, a key intermediate for generating structure diversity (Probable). For instance, addition of a cysteine followed by ring contraction gives arthripenoid A, tautomerization gives the main product arthripenoid C, addition of a molecular of water or amine affords arthripenoid D or E, respectively, and loss of one water forms arthripenoid F (Probable).</text>
</comment>
<comment type="cofactor">
    <cofactor evidence="1">
        <name>FAD</name>
        <dbReference type="ChEBI" id="CHEBI:57692"/>
    </cofactor>
</comment>
<comment type="pathway">
    <text evidence="6">Secondary metabolite biosynthesis; terpenoid biosynthesis.</text>
</comment>
<comment type="subcellular location">
    <subcellularLocation>
        <location evidence="4">Membrane</location>
        <topology evidence="4">Single-pass membrane protein</topology>
    </subcellularLocation>
</comment>
<comment type="disruption phenotype">
    <text evidence="6">Abolishes the production of arthripenoids but leads to the accumulation of new product which has no double bond in the side chain.</text>
</comment>
<comment type="similarity">
    <text evidence="8">Belongs to the paxM FAD-dependent monooxygenase family.</text>
</comment>
<feature type="chain" id="PRO_0000452552" description="FAD-dependent monooxygenase atnJ">
    <location>
        <begin position="1"/>
        <end position="421"/>
    </location>
</feature>
<feature type="transmembrane region" description="Helical" evidence="4">
    <location>
        <begin position="9"/>
        <end position="29"/>
    </location>
</feature>
<feature type="region of interest" description="Disordered" evidence="5">
    <location>
        <begin position="371"/>
        <end position="392"/>
    </location>
</feature>
<feature type="active site" evidence="3">
    <location>
        <position position="188"/>
    </location>
</feature>
<feature type="binding site" evidence="2">
    <location>
        <position position="41"/>
    </location>
    <ligand>
        <name>FAD</name>
        <dbReference type="ChEBI" id="CHEBI:57692"/>
    </ligand>
</feature>
<feature type="binding site" evidence="2">
    <location>
        <position position="54"/>
    </location>
    <ligand>
        <name>FAD</name>
        <dbReference type="ChEBI" id="CHEBI:57692"/>
    </ligand>
</feature>
<feature type="binding site" evidence="2">
    <location>
        <position position="303"/>
    </location>
    <ligand>
        <name>FAD</name>
        <dbReference type="ChEBI" id="CHEBI:57692"/>
    </ligand>
</feature>
<feature type="binding site" evidence="2">
    <location>
        <position position="316"/>
    </location>
    <ligand>
        <name>FAD</name>
        <dbReference type="ChEBI" id="CHEBI:57692"/>
    </ligand>
</feature>
<protein>
    <recommendedName>
        <fullName evidence="7">FAD-dependent monooxygenase atnJ</fullName>
        <ecNumber evidence="6">1.-.-.-</ecNumber>
    </recommendedName>
    <alternativeName>
        <fullName evidence="7">Arthripenoid biosynthesis cluster protein J</fullName>
    </alternativeName>
</protein>
<reference key="1">
    <citation type="journal article" date="2018" name="Angew. Chem. Int. Ed.">
        <title>Genome mining and comparative biosynthesis of meroterpenoids from two phylogenetically distinct fungi.</title>
        <authorList>
            <person name="Zhang X."/>
            <person name="Wang T.T."/>
            <person name="Xu Q.L."/>
            <person name="Xiong Y."/>
            <person name="Zhang L."/>
            <person name="Han H."/>
            <person name="Xu K."/>
            <person name="Guo W.J."/>
            <person name="Xu Q."/>
            <person name="Tan R.X."/>
            <person name="Ge H.M."/>
        </authorList>
    </citation>
    <scope>NUCLEOTIDE SEQUENCE [MRNA]</scope>
    <scope>DISRUPTION PHENOTYPE</scope>
    <scope>FUNCTION</scope>
    <scope>CATALYTIC ACTIVITY</scope>
    <scope>PATHWAY</scope>
    <source>
        <strain>NF2194</strain>
    </source>
</reference>
<name>ATNJ_ARTSZ</name>
<organism>
    <name type="scientific">Arthrinium sp</name>
    <dbReference type="NCBI Taxonomy" id="1756131"/>
    <lineage>
        <taxon>Eukaryota</taxon>
        <taxon>Fungi</taxon>
        <taxon>Dikarya</taxon>
        <taxon>Ascomycota</taxon>
        <taxon>Pezizomycotina</taxon>
        <taxon>Sordariomycetes</taxon>
        <taxon>Xylariomycetidae</taxon>
        <taxon>Amphisphaeriales</taxon>
        <taxon>Apiosporaceae</taxon>
        <taxon>Arthrinium</taxon>
    </lineage>
</organism>
<evidence type="ECO:0000250" key="1">
    <source>
        <dbReference type="UniProtKB" id="A6T923"/>
    </source>
</evidence>
<evidence type="ECO:0000250" key="2">
    <source>
        <dbReference type="UniProtKB" id="B8M9J8"/>
    </source>
</evidence>
<evidence type="ECO:0000250" key="3">
    <source>
        <dbReference type="UniProtKB" id="L0E4H0"/>
    </source>
</evidence>
<evidence type="ECO:0000255" key="4"/>
<evidence type="ECO:0000256" key="5">
    <source>
        <dbReference type="SAM" id="MobiDB-lite"/>
    </source>
</evidence>
<evidence type="ECO:0000269" key="6">
    <source>
    </source>
</evidence>
<evidence type="ECO:0000303" key="7">
    <source>
    </source>
</evidence>
<evidence type="ECO:0000305" key="8"/>
<evidence type="ECO:0000305" key="9">
    <source>
    </source>
</evidence>